<comment type="subcellular location">
    <subcellularLocation>
        <location evidence="5">Membrane</location>
        <topology evidence="5">Single-pass type I membrane protein</topology>
    </subcellularLocation>
</comment>
<comment type="similarity">
    <text evidence="2">Belongs to the protein kinase superfamily. Ser/Thr protein kinase family.</text>
</comment>
<keyword id="KW-0067">ATP-binding</keyword>
<keyword id="KW-0325">Glycoprotein</keyword>
<keyword id="KW-0418">Kinase</keyword>
<keyword id="KW-0472">Membrane</keyword>
<keyword id="KW-0547">Nucleotide-binding</keyword>
<keyword id="KW-1185">Reference proteome</keyword>
<keyword id="KW-0723">Serine/threonine-protein kinase</keyword>
<keyword id="KW-0732">Signal</keyword>
<keyword id="KW-0808">Transferase</keyword>
<keyword id="KW-0812">Transmembrane</keyword>
<keyword id="KW-1133">Transmembrane helix</keyword>
<reference key="1">
    <citation type="journal article" date="1999" name="Nature">
        <title>Sequence and analysis of chromosome 2 of the plant Arabidopsis thaliana.</title>
        <authorList>
            <person name="Lin X."/>
            <person name="Kaul S."/>
            <person name="Rounsley S.D."/>
            <person name="Shea T.P."/>
            <person name="Benito M.-I."/>
            <person name="Town C.D."/>
            <person name="Fujii C.Y."/>
            <person name="Mason T.M."/>
            <person name="Bowman C.L."/>
            <person name="Barnstead M.E."/>
            <person name="Feldblyum T.V."/>
            <person name="Buell C.R."/>
            <person name="Ketchum K.A."/>
            <person name="Lee J.J."/>
            <person name="Ronning C.M."/>
            <person name="Koo H.L."/>
            <person name="Moffat K.S."/>
            <person name="Cronin L.A."/>
            <person name="Shen M."/>
            <person name="Pai G."/>
            <person name="Van Aken S."/>
            <person name="Umayam L."/>
            <person name="Tallon L.J."/>
            <person name="Gill J.E."/>
            <person name="Adams M.D."/>
            <person name="Carrera A.J."/>
            <person name="Creasy T.H."/>
            <person name="Goodman H.M."/>
            <person name="Somerville C.R."/>
            <person name="Copenhaver G.P."/>
            <person name="Preuss D."/>
            <person name="Nierman W.C."/>
            <person name="White O."/>
            <person name="Eisen J.A."/>
            <person name="Salzberg S.L."/>
            <person name="Fraser C.M."/>
            <person name="Venter J.C."/>
        </authorList>
    </citation>
    <scope>NUCLEOTIDE SEQUENCE [LARGE SCALE GENOMIC DNA]</scope>
    <source>
        <strain>cv. Columbia</strain>
    </source>
</reference>
<reference key="2">
    <citation type="journal article" date="2017" name="Plant J.">
        <title>Araport11: a complete reannotation of the Arabidopsis thaliana reference genome.</title>
        <authorList>
            <person name="Cheng C.Y."/>
            <person name="Krishnakumar V."/>
            <person name="Chan A.P."/>
            <person name="Thibaud-Nissen F."/>
            <person name="Schobel S."/>
            <person name="Town C.D."/>
        </authorList>
    </citation>
    <scope>GENOME REANNOTATION</scope>
    <source>
        <strain>cv. Columbia</strain>
    </source>
</reference>
<reference key="3">
    <citation type="journal article" date="2009" name="Mol. Plant">
        <title>Diverse transcriptional programs associated with environmental stress and hormones in the Arabidopsis receptor-like kinase gene family.</title>
        <authorList>
            <person name="Chae L."/>
            <person name="Sudat S."/>
            <person name="Dudoit S."/>
            <person name="Zhu T."/>
            <person name="Luan S."/>
        </authorList>
    </citation>
    <scope>GENE FAMILY</scope>
</reference>
<organism>
    <name type="scientific">Arabidopsis thaliana</name>
    <name type="common">Mouse-ear cress</name>
    <dbReference type="NCBI Taxonomy" id="3702"/>
    <lineage>
        <taxon>Eukaryota</taxon>
        <taxon>Viridiplantae</taxon>
        <taxon>Streptophyta</taxon>
        <taxon>Embryophyta</taxon>
        <taxon>Tracheophyta</taxon>
        <taxon>Spermatophyta</taxon>
        <taxon>Magnoliopsida</taxon>
        <taxon>eudicotyledons</taxon>
        <taxon>Gunneridae</taxon>
        <taxon>Pentapetalae</taxon>
        <taxon>rosids</taxon>
        <taxon>malvids</taxon>
        <taxon>Brassicales</taxon>
        <taxon>Brassicaceae</taxon>
        <taxon>Camelineae</taxon>
        <taxon>Arabidopsis</taxon>
    </lineage>
</organism>
<feature type="signal peptide" evidence="1">
    <location>
        <begin position="1"/>
        <end position="39"/>
    </location>
</feature>
<feature type="chain" id="PRO_0000386552" description="Probable receptor-like protein kinase At2g21480">
    <location>
        <begin position="40"/>
        <end position="871"/>
    </location>
</feature>
<feature type="topological domain" description="Extracellular" evidence="1">
    <location>
        <begin position="40"/>
        <end position="439"/>
    </location>
</feature>
<feature type="transmembrane region" description="Helical" evidence="1">
    <location>
        <begin position="440"/>
        <end position="460"/>
    </location>
</feature>
<feature type="topological domain" description="Cytoplasmic" evidence="1">
    <location>
        <begin position="461"/>
        <end position="871"/>
    </location>
</feature>
<feature type="domain" description="Protein kinase" evidence="2">
    <location>
        <begin position="525"/>
        <end position="797"/>
    </location>
</feature>
<feature type="region of interest" description="Disordered" evidence="4">
    <location>
        <begin position="808"/>
        <end position="871"/>
    </location>
</feature>
<feature type="compositionally biased region" description="Low complexity" evidence="4">
    <location>
        <begin position="817"/>
        <end position="839"/>
    </location>
</feature>
<feature type="compositionally biased region" description="Polar residues" evidence="4">
    <location>
        <begin position="854"/>
        <end position="871"/>
    </location>
</feature>
<feature type="active site" description="Proton acceptor" evidence="2 3">
    <location>
        <position position="649"/>
    </location>
</feature>
<feature type="binding site" evidence="2">
    <location>
        <begin position="531"/>
        <end position="539"/>
    </location>
    <ligand>
        <name>ATP</name>
        <dbReference type="ChEBI" id="CHEBI:30616"/>
    </ligand>
</feature>
<feature type="binding site" evidence="2">
    <location>
        <position position="553"/>
    </location>
    <ligand>
        <name>ATP</name>
        <dbReference type="ChEBI" id="CHEBI:30616"/>
    </ligand>
</feature>
<feature type="glycosylation site" description="N-linked (GlcNAc...) asparagine" evidence="1">
    <location>
        <position position="169"/>
    </location>
</feature>
<feature type="glycosylation site" description="N-linked (GlcNAc...) asparagine" evidence="1">
    <location>
        <position position="182"/>
    </location>
</feature>
<feature type="glycosylation site" description="N-linked (GlcNAc...) asparagine" evidence="1">
    <location>
        <position position="253"/>
    </location>
</feature>
<feature type="glycosylation site" description="N-linked (GlcNAc...) asparagine" evidence="1">
    <location>
        <position position="316"/>
    </location>
</feature>
<feature type="glycosylation site" description="N-linked (GlcNAc...) asparagine" evidence="1">
    <location>
        <position position="381"/>
    </location>
</feature>
<sequence>MEIRKKPNIPMCLVLDSSSRPFMTLLFTILLFLTGLASAVGAVGGSPTAGFKPADDILIDCGSKSSTKTPEGRVFKSDSETVQYIEAKDDIQVSAPPSDKLPSPIYLTAKIFREEAIYKFHLTRPGWHWVRLHFFAFPNDKFDLQQATFSVLTEKYVLLHNFKLSNDNNDSQATVQKEYLLNMTDAQFALRFKPMKGSAAFINGIELVSAPDELISDAGTSLFPVNGFSGLSDYAYQSVYRVNVGGPLITPQNDTLGRTWTPDKEYLKDENLAKDVKTNPTAIIYPPGVTPLIAPQTVYATGAEMADSQTIDPNFNVTWNFPSNPSFHYFIRLHFCDIISKSLNDLYFNVYINGKTAISGLDLSTVAGDLSAPYYKDIVVNSTLMTSELQVQIGPMGEDTGKKNAILNGVEVLKMSNSVNSLDGEFGVDGQRASMGKQGMVATAGFVMMFGAFVGLGAMVYKWKKRPQDWQKRNSFSSWLLPIHAGDSTFMTSKTGSHKSNLYNSALGLGRYFSLSELQEVTKNFDASEIIGVGGFGNVYIGTIDDGTQVAIKRGNPQSEQGITEFHTEIQMLSKLRHRHLVSLIGYCDENAEMILVYEYMSNGPFRDHLYGKNLSPLTWKQRLEICIGAARGLHYLHTGTAQGIIHRDVKSTNILLDEALVAKVADFGLSKDVAFGQNHVSTAVKGSFGYLDPEYFRRQQLTDKSDVYSFGVVLLEALCARPAINPQLPREQVNLAEWAMLWKQKGLLEKIIDPHLVGAVNPESMKKFAEAAEKCLADYGVDRPTMGDVLWNLEYALQLQEAFSQGKAEAEEVETPKPVAVPAAAPTSPAATTAAASERPVSQTEEKDDSTVDQHSGTTMFTQFASLNGR</sequence>
<protein>
    <recommendedName>
        <fullName>Probable receptor-like protein kinase At2g21480</fullName>
        <ecNumber>2.7.11.-</ecNumber>
    </recommendedName>
</protein>
<name>Y2214_ARATH</name>
<dbReference type="EC" id="2.7.11.-"/>
<dbReference type="EMBL" id="AC006841">
    <property type="protein sequence ID" value="AAD23692.1"/>
    <property type="molecule type" value="Genomic_DNA"/>
</dbReference>
<dbReference type="EMBL" id="CP002685">
    <property type="protein sequence ID" value="AEC07184.1"/>
    <property type="molecule type" value="Genomic_DNA"/>
</dbReference>
<dbReference type="PIR" id="G84601">
    <property type="entry name" value="G84601"/>
</dbReference>
<dbReference type="RefSeq" id="NP_179743.1">
    <property type="nucleotide sequence ID" value="NM_127720.2"/>
</dbReference>
<dbReference type="SMR" id="Q9SJT0"/>
<dbReference type="STRING" id="3702.Q9SJT0"/>
<dbReference type="GlyGen" id="Q9SJT0">
    <property type="glycosylation" value="7 sites"/>
</dbReference>
<dbReference type="iPTMnet" id="Q9SJT0"/>
<dbReference type="PaxDb" id="3702-AT2G21480.1"/>
<dbReference type="ProteomicsDB" id="242989"/>
<dbReference type="EnsemblPlants" id="AT2G21480.1">
    <property type="protein sequence ID" value="AT2G21480.1"/>
    <property type="gene ID" value="AT2G21480"/>
</dbReference>
<dbReference type="GeneID" id="816687"/>
<dbReference type="Gramene" id="AT2G21480.1">
    <property type="protein sequence ID" value="AT2G21480.1"/>
    <property type="gene ID" value="AT2G21480"/>
</dbReference>
<dbReference type="KEGG" id="ath:AT2G21480"/>
<dbReference type="Araport" id="AT2G21480"/>
<dbReference type="TAIR" id="AT2G21480">
    <property type="gene designation" value="BUPS2"/>
</dbReference>
<dbReference type="eggNOG" id="KOG1187">
    <property type="taxonomic scope" value="Eukaryota"/>
</dbReference>
<dbReference type="HOGENOM" id="CLU_000288_42_1_1"/>
<dbReference type="InParanoid" id="Q9SJT0"/>
<dbReference type="OMA" id="PETNTGR"/>
<dbReference type="OrthoDB" id="264917at2759"/>
<dbReference type="PhylomeDB" id="Q9SJT0"/>
<dbReference type="PRO" id="PR:Q9SJT0"/>
<dbReference type="Proteomes" id="UP000006548">
    <property type="component" value="Chromosome 2"/>
</dbReference>
<dbReference type="ExpressionAtlas" id="Q9SJT0">
    <property type="expression patterns" value="baseline and differential"/>
</dbReference>
<dbReference type="GO" id="GO:0016324">
    <property type="term" value="C:apical plasma membrane"/>
    <property type="evidence" value="ECO:0000314"/>
    <property type="project" value="TAIR"/>
</dbReference>
<dbReference type="GO" id="GO:0005524">
    <property type="term" value="F:ATP binding"/>
    <property type="evidence" value="ECO:0007669"/>
    <property type="project" value="UniProtKB-KW"/>
</dbReference>
<dbReference type="GO" id="GO:0004674">
    <property type="term" value="F:protein serine/threonine kinase activity"/>
    <property type="evidence" value="ECO:0007669"/>
    <property type="project" value="UniProtKB-KW"/>
</dbReference>
<dbReference type="GO" id="GO:0004714">
    <property type="term" value="F:transmembrane receptor protein tyrosine kinase activity"/>
    <property type="evidence" value="ECO:0007669"/>
    <property type="project" value="InterPro"/>
</dbReference>
<dbReference type="GO" id="GO:0080092">
    <property type="term" value="P:regulation of pollen tube growth"/>
    <property type="evidence" value="ECO:0000316"/>
    <property type="project" value="TAIR"/>
</dbReference>
<dbReference type="CDD" id="cd14066">
    <property type="entry name" value="STKc_IRAK"/>
    <property type="match status" value="1"/>
</dbReference>
<dbReference type="FunFam" id="2.60.120.430:FF:000005">
    <property type="entry name" value="Putative receptor-like protein kinase"/>
    <property type="match status" value="1"/>
</dbReference>
<dbReference type="FunFam" id="1.10.510.10:FF:000058">
    <property type="entry name" value="Receptor-like protein kinase FERONIA"/>
    <property type="match status" value="1"/>
</dbReference>
<dbReference type="FunFam" id="2.60.120.430:FF:000001">
    <property type="entry name" value="Receptor-like protein kinase FERONIA"/>
    <property type="match status" value="1"/>
</dbReference>
<dbReference type="FunFam" id="3.30.200.20:FF:000039">
    <property type="entry name" value="receptor-like protein kinase FERONIA"/>
    <property type="match status" value="1"/>
</dbReference>
<dbReference type="Gene3D" id="2.60.120.430">
    <property type="entry name" value="Galactose-binding lectin"/>
    <property type="match status" value="2"/>
</dbReference>
<dbReference type="Gene3D" id="3.30.200.20">
    <property type="entry name" value="Phosphorylase Kinase, domain 1"/>
    <property type="match status" value="1"/>
</dbReference>
<dbReference type="Gene3D" id="1.10.510.10">
    <property type="entry name" value="Transferase(Phosphotransferase) domain 1"/>
    <property type="match status" value="1"/>
</dbReference>
<dbReference type="InterPro" id="IPR045272">
    <property type="entry name" value="ANXUR1/2-like"/>
</dbReference>
<dbReference type="InterPro" id="IPR011009">
    <property type="entry name" value="Kinase-like_dom_sf"/>
</dbReference>
<dbReference type="InterPro" id="IPR024788">
    <property type="entry name" value="Malectin-like_Carb-bd_dom"/>
</dbReference>
<dbReference type="InterPro" id="IPR000719">
    <property type="entry name" value="Prot_kinase_dom"/>
</dbReference>
<dbReference type="InterPro" id="IPR017441">
    <property type="entry name" value="Protein_kinase_ATP_BS"/>
</dbReference>
<dbReference type="InterPro" id="IPR001245">
    <property type="entry name" value="Ser-Thr/Tyr_kinase_cat_dom"/>
</dbReference>
<dbReference type="InterPro" id="IPR008271">
    <property type="entry name" value="Ser/Thr_kinase_AS"/>
</dbReference>
<dbReference type="PANTHER" id="PTHR27003:SF106">
    <property type="entry name" value="OS06G0126250 PROTEIN"/>
    <property type="match status" value="1"/>
</dbReference>
<dbReference type="PANTHER" id="PTHR27003">
    <property type="entry name" value="OS07G0166700 PROTEIN"/>
    <property type="match status" value="1"/>
</dbReference>
<dbReference type="Pfam" id="PF12819">
    <property type="entry name" value="Malectin_like"/>
    <property type="match status" value="1"/>
</dbReference>
<dbReference type="Pfam" id="PF07714">
    <property type="entry name" value="PK_Tyr_Ser-Thr"/>
    <property type="match status" value="1"/>
</dbReference>
<dbReference type="SMART" id="SM00220">
    <property type="entry name" value="S_TKc"/>
    <property type="match status" value="1"/>
</dbReference>
<dbReference type="SUPFAM" id="SSF56112">
    <property type="entry name" value="Protein kinase-like (PK-like)"/>
    <property type="match status" value="1"/>
</dbReference>
<dbReference type="PROSITE" id="PS00107">
    <property type="entry name" value="PROTEIN_KINASE_ATP"/>
    <property type="match status" value="1"/>
</dbReference>
<dbReference type="PROSITE" id="PS50011">
    <property type="entry name" value="PROTEIN_KINASE_DOM"/>
    <property type="match status" value="1"/>
</dbReference>
<dbReference type="PROSITE" id="PS00108">
    <property type="entry name" value="PROTEIN_KINASE_ST"/>
    <property type="match status" value="1"/>
</dbReference>
<evidence type="ECO:0000255" key="1"/>
<evidence type="ECO:0000255" key="2">
    <source>
        <dbReference type="PROSITE-ProRule" id="PRU00159"/>
    </source>
</evidence>
<evidence type="ECO:0000255" key="3">
    <source>
        <dbReference type="PROSITE-ProRule" id="PRU10027"/>
    </source>
</evidence>
<evidence type="ECO:0000256" key="4">
    <source>
        <dbReference type="SAM" id="MobiDB-lite"/>
    </source>
</evidence>
<evidence type="ECO:0000305" key="5"/>
<gene>
    <name type="ordered locus">At2g21480</name>
    <name type="ORF">F3K23.24</name>
</gene>
<accession>Q9SJT0</accession>
<proteinExistence type="inferred from homology"/>